<protein>
    <recommendedName>
        <fullName>Probable protein phosphatase 2C 19</fullName>
        <shortName>OsPP2C19</shortName>
        <ecNumber>3.1.3.16</ecNumber>
    </recommendedName>
</protein>
<gene>
    <name type="ordered locus">Os02g0599700</name>
    <name type="ordered locus">LOC_Os02g38780</name>
    <name type="ORF">OsJ_007181</name>
</gene>
<feature type="chain" id="PRO_0000363265" description="Probable protein phosphatase 2C 19">
    <location>
        <begin position="1"/>
        <end position="652"/>
    </location>
</feature>
<feature type="domain" description="PPM-type phosphatase" evidence="2">
    <location>
        <begin position="265"/>
        <end position="517"/>
    </location>
</feature>
<feature type="region of interest" description="Disordered" evidence="3">
    <location>
        <begin position="524"/>
        <end position="567"/>
    </location>
</feature>
<feature type="binding site" evidence="1">
    <location>
        <position position="300"/>
    </location>
    <ligand>
        <name>Mn(2+)</name>
        <dbReference type="ChEBI" id="CHEBI:29035"/>
        <label>1</label>
    </ligand>
</feature>
<feature type="binding site" evidence="1">
    <location>
        <position position="300"/>
    </location>
    <ligand>
        <name>Mn(2+)</name>
        <dbReference type="ChEBI" id="CHEBI:29035"/>
        <label>2</label>
    </ligand>
</feature>
<feature type="binding site" evidence="1">
    <location>
        <position position="301"/>
    </location>
    <ligand>
        <name>Mn(2+)</name>
        <dbReference type="ChEBI" id="CHEBI:29035"/>
        <label>1</label>
    </ligand>
</feature>
<feature type="binding site" evidence="1">
    <location>
        <position position="467"/>
    </location>
    <ligand>
        <name>Mn(2+)</name>
        <dbReference type="ChEBI" id="CHEBI:29035"/>
        <label>2</label>
    </ligand>
</feature>
<feature type="binding site" evidence="1">
    <location>
        <position position="508"/>
    </location>
    <ligand>
        <name>Mn(2+)</name>
        <dbReference type="ChEBI" id="CHEBI:29035"/>
        <label>2</label>
    </ligand>
</feature>
<name>P2C19_ORYSJ</name>
<proteinExistence type="inferred from homology"/>
<evidence type="ECO:0000250" key="1"/>
<evidence type="ECO:0000255" key="2">
    <source>
        <dbReference type="PROSITE-ProRule" id="PRU01082"/>
    </source>
</evidence>
<evidence type="ECO:0000256" key="3">
    <source>
        <dbReference type="SAM" id="MobiDB-lite"/>
    </source>
</evidence>
<evidence type="ECO:0000305" key="4"/>
<comment type="catalytic activity">
    <reaction>
        <text>O-phospho-L-seryl-[protein] + H2O = L-seryl-[protein] + phosphate</text>
        <dbReference type="Rhea" id="RHEA:20629"/>
        <dbReference type="Rhea" id="RHEA-COMP:9863"/>
        <dbReference type="Rhea" id="RHEA-COMP:11604"/>
        <dbReference type="ChEBI" id="CHEBI:15377"/>
        <dbReference type="ChEBI" id="CHEBI:29999"/>
        <dbReference type="ChEBI" id="CHEBI:43474"/>
        <dbReference type="ChEBI" id="CHEBI:83421"/>
        <dbReference type="EC" id="3.1.3.16"/>
    </reaction>
</comment>
<comment type="catalytic activity">
    <reaction>
        <text>O-phospho-L-threonyl-[protein] + H2O = L-threonyl-[protein] + phosphate</text>
        <dbReference type="Rhea" id="RHEA:47004"/>
        <dbReference type="Rhea" id="RHEA-COMP:11060"/>
        <dbReference type="Rhea" id="RHEA-COMP:11605"/>
        <dbReference type="ChEBI" id="CHEBI:15377"/>
        <dbReference type="ChEBI" id="CHEBI:30013"/>
        <dbReference type="ChEBI" id="CHEBI:43474"/>
        <dbReference type="ChEBI" id="CHEBI:61977"/>
        <dbReference type="EC" id="3.1.3.16"/>
    </reaction>
</comment>
<comment type="cofactor">
    <cofactor evidence="1">
        <name>Mg(2+)</name>
        <dbReference type="ChEBI" id="CHEBI:18420"/>
    </cofactor>
    <cofactor evidence="1">
        <name>Mn(2+)</name>
        <dbReference type="ChEBI" id="CHEBI:29035"/>
    </cofactor>
    <text evidence="1">Binds 2 magnesium or manganese ions per subunit.</text>
</comment>
<comment type="similarity">
    <text evidence="4">Belongs to the PP2C family.</text>
</comment>
<comment type="sequence caution" evidence="4">
    <conflict type="erroneous gene model prediction">
        <sequence resource="EMBL-CDS" id="BAF09254"/>
    </conflict>
</comment>
<organism>
    <name type="scientific">Oryza sativa subsp. japonica</name>
    <name type="common">Rice</name>
    <dbReference type="NCBI Taxonomy" id="39947"/>
    <lineage>
        <taxon>Eukaryota</taxon>
        <taxon>Viridiplantae</taxon>
        <taxon>Streptophyta</taxon>
        <taxon>Embryophyta</taxon>
        <taxon>Tracheophyta</taxon>
        <taxon>Spermatophyta</taxon>
        <taxon>Magnoliopsida</taxon>
        <taxon>Liliopsida</taxon>
        <taxon>Poales</taxon>
        <taxon>Poaceae</taxon>
        <taxon>BOP clade</taxon>
        <taxon>Oryzoideae</taxon>
        <taxon>Oryzeae</taxon>
        <taxon>Oryzinae</taxon>
        <taxon>Oryza</taxon>
        <taxon>Oryza sativa</taxon>
    </lineage>
</organism>
<keyword id="KW-0378">Hydrolase</keyword>
<keyword id="KW-0460">Magnesium</keyword>
<keyword id="KW-0464">Manganese</keyword>
<keyword id="KW-0479">Metal-binding</keyword>
<keyword id="KW-0904">Protein phosphatase</keyword>
<keyword id="KW-1185">Reference proteome</keyword>
<accession>Q0DZT4</accession>
<accession>A3A8Q9</accession>
<dbReference type="EC" id="3.1.3.16"/>
<dbReference type="EMBL" id="AP008208">
    <property type="protein sequence ID" value="BAF09254.1"/>
    <property type="status" value="ALT_SEQ"/>
    <property type="molecule type" value="Genomic_DNA"/>
</dbReference>
<dbReference type="EMBL" id="AP014958">
    <property type="status" value="NOT_ANNOTATED_CDS"/>
    <property type="molecule type" value="Genomic_DNA"/>
</dbReference>
<dbReference type="EMBL" id="CM000139">
    <property type="status" value="NOT_ANNOTATED_CDS"/>
    <property type="molecule type" value="Genomic_DNA"/>
</dbReference>
<dbReference type="SMR" id="Q0DZT4"/>
<dbReference type="FunCoup" id="Q0DZT4">
    <property type="interactions" value="3"/>
</dbReference>
<dbReference type="STRING" id="39947.Q0DZT4"/>
<dbReference type="PaxDb" id="39947-Q0DZT4"/>
<dbReference type="eggNOG" id="KOG0698">
    <property type="taxonomic scope" value="Eukaryota"/>
</dbReference>
<dbReference type="InParanoid" id="Q0DZT4"/>
<dbReference type="Proteomes" id="UP000000763">
    <property type="component" value="Chromosome 2"/>
</dbReference>
<dbReference type="Proteomes" id="UP000007752">
    <property type="component" value="Chromosome 2"/>
</dbReference>
<dbReference type="Proteomes" id="UP000059680">
    <property type="component" value="Chromosome 2"/>
</dbReference>
<dbReference type="GO" id="GO:0046872">
    <property type="term" value="F:metal ion binding"/>
    <property type="evidence" value="ECO:0007669"/>
    <property type="project" value="UniProtKB-KW"/>
</dbReference>
<dbReference type="GO" id="GO:0004722">
    <property type="term" value="F:protein serine/threonine phosphatase activity"/>
    <property type="evidence" value="ECO:0007669"/>
    <property type="project" value="UniProtKB-EC"/>
</dbReference>
<dbReference type="GO" id="GO:0007165">
    <property type="term" value="P:signal transduction"/>
    <property type="evidence" value="ECO:0000318"/>
    <property type="project" value="GO_Central"/>
</dbReference>
<dbReference type="CDD" id="cd00143">
    <property type="entry name" value="PP2Cc"/>
    <property type="match status" value="1"/>
</dbReference>
<dbReference type="Gene3D" id="3.60.40.10">
    <property type="entry name" value="PPM-type phosphatase domain"/>
    <property type="match status" value="1"/>
</dbReference>
<dbReference type="InterPro" id="IPR015655">
    <property type="entry name" value="PP2C"/>
</dbReference>
<dbReference type="InterPro" id="IPR000222">
    <property type="entry name" value="PP2C_BS"/>
</dbReference>
<dbReference type="InterPro" id="IPR036457">
    <property type="entry name" value="PPM-type-like_dom_sf"/>
</dbReference>
<dbReference type="InterPro" id="IPR001932">
    <property type="entry name" value="PPM-type_phosphatase-like_dom"/>
</dbReference>
<dbReference type="PANTHER" id="PTHR13832">
    <property type="entry name" value="PROTEIN PHOSPHATASE 2C"/>
    <property type="match status" value="1"/>
</dbReference>
<dbReference type="PANTHER" id="PTHR13832:SF285">
    <property type="entry name" value="PROTEIN PHOSPHATASE 2C 22-RELATED"/>
    <property type="match status" value="1"/>
</dbReference>
<dbReference type="Pfam" id="PF00481">
    <property type="entry name" value="PP2C"/>
    <property type="match status" value="2"/>
</dbReference>
<dbReference type="SMART" id="SM00332">
    <property type="entry name" value="PP2Cc"/>
    <property type="match status" value="1"/>
</dbReference>
<dbReference type="SUPFAM" id="SSF81606">
    <property type="entry name" value="PP2C-like"/>
    <property type="match status" value="1"/>
</dbReference>
<dbReference type="PROSITE" id="PS01032">
    <property type="entry name" value="PPM_1"/>
    <property type="match status" value="1"/>
</dbReference>
<dbReference type="PROSITE" id="PS51746">
    <property type="entry name" value="PPM_2"/>
    <property type="match status" value="1"/>
</dbReference>
<reference key="1">
    <citation type="journal article" date="2005" name="Nature">
        <title>The map-based sequence of the rice genome.</title>
        <authorList>
            <consortium name="International rice genome sequencing project (IRGSP)"/>
        </authorList>
    </citation>
    <scope>NUCLEOTIDE SEQUENCE [LARGE SCALE GENOMIC DNA]</scope>
    <source>
        <strain>cv. Nipponbare</strain>
    </source>
</reference>
<reference key="2">
    <citation type="journal article" date="2008" name="Nucleic Acids Res.">
        <title>The rice annotation project database (RAP-DB): 2008 update.</title>
        <authorList>
            <consortium name="The rice annotation project (RAP)"/>
        </authorList>
    </citation>
    <scope>GENOME REANNOTATION</scope>
    <source>
        <strain>cv. Nipponbare</strain>
    </source>
</reference>
<reference key="3">
    <citation type="journal article" date="2013" name="Rice">
        <title>Improvement of the Oryza sativa Nipponbare reference genome using next generation sequence and optical map data.</title>
        <authorList>
            <person name="Kawahara Y."/>
            <person name="de la Bastide M."/>
            <person name="Hamilton J.P."/>
            <person name="Kanamori H."/>
            <person name="McCombie W.R."/>
            <person name="Ouyang S."/>
            <person name="Schwartz D.C."/>
            <person name="Tanaka T."/>
            <person name="Wu J."/>
            <person name="Zhou S."/>
            <person name="Childs K.L."/>
            <person name="Davidson R.M."/>
            <person name="Lin H."/>
            <person name="Quesada-Ocampo L."/>
            <person name="Vaillancourt B."/>
            <person name="Sakai H."/>
            <person name="Lee S.S."/>
            <person name="Kim J."/>
            <person name="Numa H."/>
            <person name="Itoh T."/>
            <person name="Buell C.R."/>
            <person name="Matsumoto T."/>
        </authorList>
    </citation>
    <scope>GENOME REANNOTATION</scope>
    <source>
        <strain>cv. Nipponbare</strain>
    </source>
</reference>
<reference key="4">
    <citation type="journal article" date="2005" name="PLoS Biol.">
        <title>The genomes of Oryza sativa: a history of duplications.</title>
        <authorList>
            <person name="Yu J."/>
            <person name="Wang J."/>
            <person name="Lin W."/>
            <person name="Li S."/>
            <person name="Li H."/>
            <person name="Zhou J."/>
            <person name="Ni P."/>
            <person name="Dong W."/>
            <person name="Hu S."/>
            <person name="Zeng C."/>
            <person name="Zhang J."/>
            <person name="Zhang Y."/>
            <person name="Li R."/>
            <person name="Xu Z."/>
            <person name="Li S."/>
            <person name="Li X."/>
            <person name="Zheng H."/>
            <person name="Cong L."/>
            <person name="Lin L."/>
            <person name="Yin J."/>
            <person name="Geng J."/>
            <person name="Li G."/>
            <person name="Shi J."/>
            <person name="Liu J."/>
            <person name="Lv H."/>
            <person name="Li J."/>
            <person name="Wang J."/>
            <person name="Deng Y."/>
            <person name="Ran L."/>
            <person name="Shi X."/>
            <person name="Wang X."/>
            <person name="Wu Q."/>
            <person name="Li C."/>
            <person name="Ren X."/>
            <person name="Wang J."/>
            <person name="Wang X."/>
            <person name="Li D."/>
            <person name="Liu D."/>
            <person name="Zhang X."/>
            <person name="Ji Z."/>
            <person name="Zhao W."/>
            <person name="Sun Y."/>
            <person name="Zhang Z."/>
            <person name="Bao J."/>
            <person name="Han Y."/>
            <person name="Dong L."/>
            <person name="Ji J."/>
            <person name="Chen P."/>
            <person name="Wu S."/>
            <person name="Liu J."/>
            <person name="Xiao Y."/>
            <person name="Bu D."/>
            <person name="Tan J."/>
            <person name="Yang L."/>
            <person name="Ye C."/>
            <person name="Zhang J."/>
            <person name="Xu J."/>
            <person name="Zhou Y."/>
            <person name="Yu Y."/>
            <person name="Zhang B."/>
            <person name="Zhuang S."/>
            <person name="Wei H."/>
            <person name="Liu B."/>
            <person name="Lei M."/>
            <person name="Yu H."/>
            <person name="Li Y."/>
            <person name="Xu H."/>
            <person name="Wei S."/>
            <person name="He X."/>
            <person name="Fang L."/>
            <person name="Zhang Z."/>
            <person name="Zhang Y."/>
            <person name="Huang X."/>
            <person name="Su Z."/>
            <person name="Tong W."/>
            <person name="Li J."/>
            <person name="Tong Z."/>
            <person name="Li S."/>
            <person name="Ye J."/>
            <person name="Wang L."/>
            <person name="Fang L."/>
            <person name="Lei T."/>
            <person name="Chen C.-S."/>
            <person name="Chen H.-C."/>
            <person name="Xu Z."/>
            <person name="Li H."/>
            <person name="Huang H."/>
            <person name="Zhang F."/>
            <person name="Xu H."/>
            <person name="Li N."/>
            <person name="Zhao C."/>
            <person name="Li S."/>
            <person name="Dong L."/>
            <person name="Huang Y."/>
            <person name="Li L."/>
            <person name="Xi Y."/>
            <person name="Qi Q."/>
            <person name="Li W."/>
            <person name="Zhang B."/>
            <person name="Hu W."/>
            <person name="Zhang Y."/>
            <person name="Tian X."/>
            <person name="Jiao Y."/>
            <person name="Liang X."/>
            <person name="Jin J."/>
            <person name="Gao L."/>
            <person name="Zheng W."/>
            <person name="Hao B."/>
            <person name="Liu S.-M."/>
            <person name="Wang W."/>
            <person name="Yuan L."/>
            <person name="Cao M."/>
            <person name="McDermott J."/>
            <person name="Samudrala R."/>
            <person name="Wang J."/>
            <person name="Wong G.K.-S."/>
            <person name="Yang H."/>
        </authorList>
    </citation>
    <scope>NUCLEOTIDE SEQUENCE [LARGE SCALE GENOMIC DNA]</scope>
    <source>
        <strain>cv. Nipponbare</strain>
    </source>
</reference>
<reference key="5">
    <citation type="journal article" date="2008" name="BMC Genomics">
        <title>Genome-wide and expression analysis of protein phosphatase 2C in rice and Arabidopsis.</title>
        <authorList>
            <person name="Xue T."/>
            <person name="Wang D."/>
            <person name="Zhang S."/>
            <person name="Ehlting J."/>
            <person name="Ni F."/>
            <person name="Jacab S."/>
            <person name="Zheng C."/>
            <person name="Zhong Y."/>
        </authorList>
    </citation>
    <scope>GENE FAMILY</scope>
    <scope>NOMENCLATURE</scope>
</reference>
<sequence>MDAGGEEEKQERHRVDGASPSMVALRSDVLHAVLGGKSHNQDTSELVTLSEWSKNKFPLYAYAAAFMFLVMQEYDKRSHGIDFLNRDFVVRDLGMPSLNKHFPVKEFYCSYRRKSGHSTYTYGFFMLQKLILIQNAHIRREEEEEGACSMVTTSHRTGHSRSVGLAARDDPTAEMRLVQGEGSVGTTSHRMGALLERWISREGRTDGGDTSVQGERSVGTTSHRMGALLDVGSAVDDPAKQRSAMGNSLPVESKFTDEKENDRIKYVVSSMQGWGEKMEDAHAAILNLDDTMTSFFGVYDGHGGAEVASYCAKRFHIELCNHEDYDSNLSNAMRSAFYSMDEDLQLSDAWRELVIPRNNGWMYFLKAAACTSICKATYTEPAYEGSTACVVVIRGNQLIVGHAGDSRCVLSRNGQASALSVDHKPDRDFACKKNERLPPEDQMLTCNPDILTMDITDDMEFLVIATEGLWCNMTNQNVVDHTHDRLLEGAEARVICEELVQFGLPSGDNTTVILVLFKPGAYPAVPPVDTDTDTDSHTGDDVDNNDPANEVDPTANAGSDDSNTSDEVKVDATATAVGSSSTTAVAADEATVVSLSTATITIVDNYFFINTSEEVDPTANAGSDDSNTGDEVKVDATASSGLSDWELIYSEF</sequence>